<sequence>MKTVETLNEGLKREYRVTITAKDIDARVDEEVKSIAPTVRMPGFRPGKVPPNLIRKMHGAALSADALNKAIDAGVRDLMAKEKLRPALQPAVTLADGYEAGKDAELTVALEVLPEIETPSIDGLKLERLTVPADDKAVMAKIEEFAAQMKRFEEAPKTRKAATGDQVIIDFAGSVDGTPFDGGTGEDMAVEIGSGQLIPGFEDQLVGVKAGDEKTLKVTFPEDYPVETLKGKLAEFAVTVKEVKVPAATKIDDEFAKSLGLESLDKLKELMKDQVEQELNGLTRTHMKRKLLDQLAAAHDFEVPPTMVEAEFNQIWQQLEHEASHEEDPEAAKAELENDREEYRAIAVRRVRLGLLLSEIGQAHGVQVSQQEMQRLIMQAAQQYRPEDRQRFVEYVQQDALAAAQLRAPLYEDKVVDFLFEKAEITDRETTREELEAAIEADDDSGHVHGPGCGHDHDEKPAKKAAAKKPATKKEAVKDEAKAEEAPAKKAPAKKAEPKAEAKPAAAKKAAPAKAAAEEKAEPAKKAPAKKAAAKK</sequence>
<comment type="function">
    <text evidence="1">Involved in protein export. Acts as a chaperone by maintaining the newly synthesized protein in an open conformation. Functions as a peptidyl-prolyl cis-trans isomerase.</text>
</comment>
<comment type="catalytic activity">
    <reaction evidence="1">
        <text>[protein]-peptidylproline (omega=180) = [protein]-peptidylproline (omega=0)</text>
        <dbReference type="Rhea" id="RHEA:16237"/>
        <dbReference type="Rhea" id="RHEA-COMP:10747"/>
        <dbReference type="Rhea" id="RHEA-COMP:10748"/>
        <dbReference type="ChEBI" id="CHEBI:83833"/>
        <dbReference type="ChEBI" id="CHEBI:83834"/>
        <dbReference type="EC" id="5.2.1.8"/>
    </reaction>
</comment>
<comment type="subcellular location">
    <subcellularLocation>
        <location>Cytoplasm</location>
    </subcellularLocation>
    <text evidence="1">About half TF is bound to the ribosome near the polypeptide exit tunnel while the other half is free in the cytoplasm.</text>
</comment>
<comment type="domain">
    <text evidence="1">Consists of 3 domains; the N-terminus binds the ribosome, the middle domain has PPIase activity, while the C-terminus has intrinsic chaperone activity on its own.</text>
</comment>
<comment type="similarity">
    <text evidence="1">Belongs to the FKBP-type PPIase family. Tig subfamily.</text>
</comment>
<comment type="sequence caution" evidence="3">
    <conflict type="erroneous initiation">
        <sequence resource="EMBL-CDS" id="ABF52561"/>
    </conflict>
</comment>
<feature type="chain" id="PRO_0000256620" description="Trigger factor">
    <location>
        <begin position="1"/>
        <end position="536"/>
    </location>
</feature>
<feature type="domain" description="PPIase FKBP-type" evidence="1">
    <location>
        <begin position="164"/>
        <end position="249"/>
    </location>
</feature>
<feature type="region of interest" description="Disordered" evidence="2">
    <location>
        <begin position="439"/>
        <end position="536"/>
    </location>
</feature>
<feature type="compositionally biased region" description="Basic and acidic residues" evidence="2">
    <location>
        <begin position="472"/>
        <end position="502"/>
    </location>
</feature>
<feature type="compositionally biased region" description="Low complexity" evidence="2">
    <location>
        <begin position="503"/>
        <end position="515"/>
    </location>
</feature>
<feature type="compositionally biased region" description="Basic and acidic residues" evidence="2">
    <location>
        <begin position="516"/>
        <end position="525"/>
    </location>
</feature>
<feature type="compositionally biased region" description="Basic residues" evidence="2">
    <location>
        <begin position="527"/>
        <end position="536"/>
    </location>
</feature>
<keyword id="KW-0131">Cell cycle</keyword>
<keyword id="KW-0132">Cell division</keyword>
<keyword id="KW-0143">Chaperone</keyword>
<keyword id="KW-0963">Cytoplasm</keyword>
<keyword id="KW-0413">Isomerase</keyword>
<keyword id="KW-1185">Reference proteome</keyword>
<keyword id="KW-0697">Rotamase</keyword>
<gene>
    <name evidence="1" type="primary">tig</name>
    <name type="ordered locus">Sala_0843</name>
</gene>
<dbReference type="EC" id="5.2.1.8" evidence="1"/>
<dbReference type="EMBL" id="CP000356">
    <property type="protein sequence ID" value="ABF52561.1"/>
    <property type="status" value="ALT_INIT"/>
    <property type="molecule type" value="Genomic_DNA"/>
</dbReference>
<dbReference type="RefSeq" id="WP_041383082.1">
    <property type="nucleotide sequence ID" value="NC_008048.1"/>
</dbReference>
<dbReference type="SMR" id="Q1GUW1"/>
<dbReference type="STRING" id="317655.Sala_0843"/>
<dbReference type="KEGG" id="sal:Sala_0843"/>
<dbReference type="eggNOG" id="COG0544">
    <property type="taxonomic scope" value="Bacteria"/>
</dbReference>
<dbReference type="HOGENOM" id="CLU_033058_2_2_5"/>
<dbReference type="OrthoDB" id="9767721at2"/>
<dbReference type="Proteomes" id="UP000006578">
    <property type="component" value="Chromosome"/>
</dbReference>
<dbReference type="GO" id="GO:0005737">
    <property type="term" value="C:cytoplasm"/>
    <property type="evidence" value="ECO:0007669"/>
    <property type="project" value="UniProtKB-SubCell"/>
</dbReference>
<dbReference type="GO" id="GO:0003755">
    <property type="term" value="F:peptidyl-prolyl cis-trans isomerase activity"/>
    <property type="evidence" value="ECO:0007669"/>
    <property type="project" value="UniProtKB-UniRule"/>
</dbReference>
<dbReference type="GO" id="GO:0044183">
    <property type="term" value="F:protein folding chaperone"/>
    <property type="evidence" value="ECO:0007669"/>
    <property type="project" value="TreeGrafter"/>
</dbReference>
<dbReference type="GO" id="GO:0043022">
    <property type="term" value="F:ribosome binding"/>
    <property type="evidence" value="ECO:0007669"/>
    <property type="project" value="TreeGrafter"/>
</dbReference>
<dbReference type="GO" id="GO:0051083">
    <property type="term" value="P:'de novo' cotranslational protein folding"/>
    <property type="evidence" value="ECO:0007669"/>
    <property type="project" value="TreeGrafter"/>
</dbReference>
<dbReference type="GO" id="GO:0051301">
    <property type="term" value="P:cell division"/>
    <property type="evidence" value="ECO:0007669"/>
    <property type="project" value="UniProtKB-KW"/>
</dbReference>
<dbReference type="GO" id="GO:0061077">
    <property type="term" value="P:chaperone-mediated protein folding"/>
    <property type="evidence" value="ECO:0007669"/>
    <property type="project" value="TreeGrafter"/>
</dbReference>
<dbReference type="GO" id="GO:0015031">
    <property type="term" value="P:protein transport"/>
    <property type="evidence" value="ECO:0007669"/>
    <property type="project" value="UniProtKB-UniRule"/>
</dbReference>
<dbReference type="GO" id="GO:0043335">
    <property type="term" value="P:protein unfolding"/>
    <property type="evidence" value="ECO:0007669"/>
    <property type="project" value="TreeGrafter"/>
</dbReference>
<dbReference type="FunFam" id="3.10.50.40:FF:000001">
    <property type="entry name" value="Trigger factor"/>
    <property type="match status" value="1"/>
</dbReference>
<dbReference type="Gene3D" id="3.10.50.40">
    <property type="match status" value="1"/>
</dbReference>
<dbReference type="Gene3D" id="3.30.70.1050">
    <property type="entry name" value="Trigger factor ribosome-binding domain"/>
    <property type="match status" value="1"/>
</dbReference>
<dbReference type="Gene3D" id="1.10.3120.10">
    <property type="entry name" value="Trigger factor, C-terminal domain"/>
    <property type="match status" value="1"/>
</dbReference>
<dbReference type="HAMAP" id="MF_00303">
    <property type="entry name" value="Trigger_factor_Tig"/>
    <property type="match status" value="1"/>
</dbReference>
<dbReference type="InterPro" id="IPR046357">
    <property type="entry name" value="PPIase_dom_sf"/>
</dbReference>
<dbReference type="InterPro" id="IPR001179">
    <property type="entry name" value="PPIase_FKBP_dom"/>
</dbReference>
<dbReference type="InterPro" id="IPR005215">
    <property type="entry name" value="Trig_fac"/>
</dbReference>
<dbReference type="InterPro" id="IPR008880">
    <property type="entry name" value="Trigger_fac_C"/>
</dbReference>
<dbReference type="InterPro" id="IPR037041">
    <property type="entry name" value="Trigger_fac_C_sf"/>
</dbReference>
<dbReference type="InterPro" id="IPR008881">
    <property type="entry name" value="Trigger_fac_ribosome-bd_bac"/>
</dbReference>
<dbReference type="InterPro" id="IPR036611">
    <property type="entry name" value="Trigger_fac_ribosome-bd_sf"/>
</dbReference>
<dbReference type="InterPro" id="IPR027304">
    <property type="entry name" value="Trigger_fact/SurA_dom_sf"/>
</dbReference>
<dbReference type="NCBIfam" id="TIGR00115">
    <property type="entry name" value="tig"/>
    <property type="match status" value="1"/>
</dbReference>
<dbReference type="PANTHER" id="PTHR30560">
    <property type="entry name" value="TRIGGER FACTOR CHAPERONE AND PEPTIDYL-PROLYL CIS/TRANS ISOMERASE"/>
    <property type="match status" value="1"/>
</dbReference>
<dbReference type="PANTHER" id="PTHR30560:SF3">
    <property type="entry name" value="TRIGGER FACTOR-LIKE PROTEIN TIG, CHLOROPLASTIC"/>
    <property type="match status" value="1"/>
</dbReference>
<dbReference type="Pfam" id="PF00254">
    <property type="entry name" value="FKBP_C"/>
    <property type="match status" value="1"/>
</dbReference>
<dbReference type="Pfam" id="PF05698">
    <property type="entry name" value="Trigger_C"/>
    <property type="match status" value="1"/>
</dbReference>
<dbReference type="Pfam" id="PF05697">
    <property type="entry name" value="Trigger_N"/>
    <property type="match status" value="1"/>
</dbReference>
<dbReference type="SUPFAM" id="SSF54534">
    <property type="entry name" value="FKBP-like"/>
    <property type="match status" value="1"/>
</dbReference>
<dbReference type="SUPFAM" id="SSF109998">
    <property type="entry name" value="Triger factor/SurA peptide-binding domain-like"/>
    <property type="match status" value="1"/>
</dbReference>
<dbReference type="SUPFAM" id="SSF102735">
    <property type="entry name" value="Trigger factor ribosome-binding domain"/>
    <property type="match status" value="1"/>
</dbReference>
<dbReference type="PROSITE" id="PS50059">
    <property type="entry name" value="FKBP_PPIASE"/>
    <property type="match status" value="1"/>
</dbReference>
<reference key="1">
    <citation type="journal article" date="2009" name="Proc. Natl. Acad. Sci. U.S.A.">
        <title>The genomic basis of trophic strategy in marine bacteria.</title>
        <authorList>
            <person name="Lauro F.M."/>
            <person name="McDougald D."/>
            <person name="Thomas T."/>
            <person name="Williams T.J."/>
            <person name="Egan S."/>
            <person name="Rice S."/>
            <person name="DeMaere M.Z."/>
            <person name="Ting L."/>
            <person name="Ertan H."/>
            <person name="Johnson J."/>
            <person name="Ferriera S."/>
            <person name="Lapidus A."/>
            <person name="Anderson I."/>
            <person name="Kyrpides N."/>
            <person name="Munk A.C."/>
            <person name="Detter C."/>
            <person name="Han C.S."/>
            <person name="Brown M.V."/>
            <person name="Robb F.T."/>
            <person name="Kjelleberg S."/>
            <person name="Cavicchioli R."/>
        </authorList>
    </citation>
    <scope>NUCLEOTIDE SEQUENCE [LARGE SCALE GENOMIC DNA]</scope>
    <source>
        <strain>DSM 13593 / LMG 18877 / RB2256</strain>
    </source>
</reference>
<organism>
    <name type="scientific">Sphingopyxis alaskensis (strain DSM 13593 / LMG 18877 / RB2256)</name>
    <name type="common">Sphingomonas alaskensis</name>
    <dbReference type="NCBI Taxonomy" id="317655"/>
    <lineage>
        <taxon>Bacteria</taxon>
        <taxon>Pseudomonadati</taxon>
        <taxon>Pseudomonadota</taxon>
        <taxon>Alphaproteobacteria</taxon>
        <taxon>Sphingomonadales</taxon>
        <taxon>Sphingomonadaceae</taxon>
        <taxon>Sphingopyxis</taxon>
    </lineage>
</organism>
<proteinExistence type="inferred from homology"/>
<name>TIG_SPHAL</name>
<evidence type="ECO:0000255" key="1">
    <source>
        <dbReference type="HAMAP-Rule" id="MF_00303"/>
    </source>
</evidence>
<evidence type="ECO:0000256" key="2">
    <source>
        <dbReference type="SAM" id="MobiDB-lite"/>
    </source>
</evidence>
<evidence type="ECO:0000305" key="3"/>
<protein>
    <recommendedName>
        <fullName evidence="1">Trigger factor</fullName>
        <shortName evidence="1">TF</shortName>
        <ecNumber evidence="1">5.2.1.8</ecNumber>
    </recommendedName>
    <alternativeName>
        <fullName evidence="1">PPIase</fullName>
    </alternativeName>
</protein>
<accession>Q1GUW1</accession>